<reference key="1">
    <citation type="journal article" date="2000" name="Science">
        <title>The genome sequence of Drosophila melanogaster.</title>
        <authorList>
            <person name="Adams M.D."/>
            <person name="Celniker S.E."/>
            <person name="Holt R.A."/>
            <person name="Evans C.A."/>
            <person name="Gocayne J.D."/>
            <person name="Amanatides P.G."/>
            <person name="Scherer S.E."/>
            <person name="Li P.W."/>
            <person name="Hoskins R.A."/>
            <person name="Galle R.F."/>
            <person name="George R.A."/>
            <person name="Lewis S.E."/>
            <person name="Richards S."/>
            <person name="Ashburner M."/>
            <person name="Henderson S.N."/>
            <person name="Sutton G.G."/>
            <person name="Wortman J.R."/>
            <person name="Yandell M.D."/>
            <person name="Zhang Q."/>
            <person name="Chen L.X."/>
            <person name="Brandon R.C."/>
            <person name="Rogers Y.-H.C."/>
            <person name="Blazej R.G."/>
            <person name="Champe M."/>
            <person name="Pfeiffer B.D."/>
            <person name="Wan K.H."/>
            <person name="Doyle C."/>
            <person name="Baxter E.G."/>
            <person name="Helt G."/>
            <person name="Nelson C.R."/>
            <person name="Miklos G.L.G."/>
            <person name="Abril J.F."/>
            <person name="Agbayani A."/>
            <person name="An H.-J."/>
            <person name="Andrews-Pfannkoch C."/>
            <person name="Baldwin D."/>
            <person name="Ballew R.M."/>
            <person name="Basu A."/>
            <person name="Baxendale J."/>
            <person name="Bayraktaroglu L."/>
            <person name="Beasley E.M."/>
            <person name="Beeson K.Y."/>
            <person name="Benos P.V."/>
            <person name="Berman B.P."/>
            <person name="Bhandari D."/>
            <person name="Bolshakov S."/>
            <person name="Borkova D."/>
            <person name="Botchan M.R."/>
            <person name="Bouck J."/>
            <person name="Brokstein P."/>
            <person name="Brottier P."/>
            <person name="Burtis K.C."/>
            <person name="Busam D.A."/>
            <person name="Butler H."/>
            <person name="Cadieu E."/>
            <person name="Center A."/>
            <person name="Chandra I."/>
            <person name="Cherry J.M."/>
            <person name="Cawley S."/>
            <person name="Dahlke C."/>
            <person name="Davenport L.B."/>
            <person name="Davies P."/>
            <person name="de Pablos B."/>
            <person name="Delcher A."/>
            <person name="Deng Z."/>
            <person name="Mays A.D."/>
            <person name="Dew I."/>
            <person name="Dietz S.M."/>
            <person name="Dodson K."/>
            <person name="Doup L.E."/>
            <person name="Downes M."/>
            <person name="Dugan-Rocha S."/>
            <person name="Dunkov B.C."/>
            <person name="Dunn P."/>
            <person name="Durbin K.J."/>
            <person name="Evangelista C.C."/>
            <person name="Ferraz C."/>
            <person name="Ferriera S."/>
            <person name="Fleischmann W."/>
            <person name="Fosler C."/>
            <person name="Gabrielian A.E."/>
            <person name="Garg N.S."/>
            <person name="Gelbart W.M."/>
            <person name="Glasser K."/>
            <person name="Glodek A."/>
            <person name="Gong F."/>
            <person name="Gorrell J.H."/>
            <person name="Gu Z."/>
            <person name="Guan P."/>
            <person name="Harris M."/>
            <person name="Harris N.L."/>
            <person name="Harvey D.A."/>
            <person name="Heiman T.J."/>
            <person name="Hernandez J.R."/>
            <person name="Houck J."/>
            <person name="Hostin D."/>
            <person name="Houston K.A."/>
            <person name="Howland T.J."/>
            <person name="Wei M.-H."/>
            <person name="Ibegwam C."/>
            <person name="Jalali M."/>
            <person name="Kalush F."/>
            <person name="Karpen G.H."/>
            <person name="Ke Z."/>
            <person name="Kennison J.A."/>
            <person name="Ketchum K.A."/>
            <person name="Kimmel B.E."/>
            <person name="Kodira C.D."/>
            <person name="Kraft C.L."/>
            <person name="Kravitz S."/>
            <person name="Kulp D."/>
            <person name="Lai Z."/>
            <person name="Lasko P."/>
            <person name="Lei Y."/>
            <person name="Levitsky A.A."/>
            <person name="Li J.H."/>
            <person name="Li Z."/>
            <person name="Liang Y."/>
            <person name="Lin X."/>
            <person name="Liu X."/>
            <person name="Mattei B."/>
            <person name="McIntosh T.C."/>
            <person name="McLeod M.P."/>
            <person name="McPherson D."/>
            <person name="Merkulov G."/>
            <person name="Milshina N.V."/>
            <person name="Mobarry C."/>
            <person name="Morris J."/>
            <person name="Moshrefi A."/>
            <person name="Mount S.M."/>
            <person name="Moy M."/>
            <person name="Murphy B."/>
            <person name="Murphy L."/>
            <person name="Muzny D.M."/>
            <person name="Nelson D.L."/>
            <person name="Nelson D.R."/>
            <person name="Nelson K.A."/>
            <person name="Nixon K."/>
            <person name="Nusskern D.R."/>
            <person name="Pacleb J.M."/>
            <person name="Palazzolo M."/>
            <person name="Pittman G.S."/>
            <person name="Pan S."/>
            <person name="Pollard J."/>
            <person name="Puri V."/>
            <person name="Reese M.G."/>
            <person name="Reinert K."/>
            <person name="Remington K."/>
            <person name="Saunders R.D.C."/>
            <person name="Scheeler F."/>
            <person name="Shen H."/>
            <person name="Shue B.C."/>
            <person name="Siden-Kiamos I."/>
            <person name="Simpson M."/>
            <person name="Skupski M.P."/>
            <person name="Smith T.J."/>
            <person name="Spier E."/>
            <person name="Spradling A.C."/>
            <person name="Stapleton M."/>
            <person name="Strong R."/>
            <person name="Sun E."/>
            <person name="Svirskas R."/>
            <person name="Tector C."/>
            <person name="Turner R."/>
            <person name="Venter E."/>
            <person name="Wang A.H."/>
            <person name="Wang X."/>
            <person name="Wang Z.-Y."/>
            <person name="Wassarman D.A."/>
            <person name="Weinstock G.M."/>
            <person name="Weissenbach J."/>
            <person name="Williams S.M."/>
            <person name="Woodage T."/>
            <person name="Worley K.C."/>
            <person name="Wu D."/>
            <person name="Yang S."/>
            <person name="Yao Q.A."/>
            <person name="Ye J."/>
            <person name="Yeh R.-F."/>
            <person name="Zaveri J.S."/>
            <person name="Zhan M."/>
            <person name="Zhang G."/>
            <person name="Zhao Q."/>
            <person name="Zheng L."/>
            <person name="Zheng X.H."/>
            <person name="Zhong F.N."/>
            <person name="Zhong W."/>
            <person name="Zhou X."/>
            <person name="Zhu S.C."/>
            <person name="Zhu X."/>
            <person name="Smith H.O."/>
            <person name="Gibbs R.A."/>
            <person name="Myers E.W."/>
            <person name="Rubin G.M."/>
            <person name="Venter J.C."/>
        </authorList>
    </citation>
    <scope>NUCLEOTIDE SEQUENCE [LARGE SCALE GENOMIC DNA]</scope>
    <source>
        <strain>Berkeley</strain>
    </source>
</reference>
<reference key="2">
    <citation type="journal article" date="2002" name="Genome Biol.">
        <title>Annotation of the Drosophila melanogaster euchromatic genome: a systematic review.</title>
        <authorList>
            <person name="Misra S."/>
            <person name="Crosby M.A."/>
            <person name="Mungall C.J."/>
            <person name="Matthews B.B."/>
            <person name="Campbell K.S."/>
            <person name="Hradecky P."/>
            <person name="Huang Y."/>
            <person name="Kaminker J.S."/>
            <person name="Millburn G.H."/>
            <person name="Prochnik S.E."/>
            <person name="Smith C.D."/>
            <person name="Tupy J.L."/>
            <person name="Whitfield E.J."/>
            <person name="Bayraktaroglu L."/>
            <person name="Berman B.P."/>
            <person name="Bettencourt B.R."/>
            <person name="Celniker S.E."/>
            <person name="de Grey A.D.N.J."/>
            <person name="Drysdale R.A."/>
            <person name="Harris N.L."/>
            <person name="Richter J."/>
            <person name="Russo S."/>
            <person name="Schroeder A.J."/>
            <person name="Shu S.Q."/>
            <person name="Stapleton M."/>
            <person name="Yamada C."/>
            <person name="Ashburner M."/>
            <person name="Gelbart W.M."/>
            <person name="Rubin G.M."/>
            <person name="Lewis S.E."/>
        </authorList>
    </citation>
    <scope>GENOME REANNOTATION</scope>
    <source>
        <strain>Berkeley</strain>
    </source>
</reference>
<reference key="3">
    <citation type="journal article" date="2002" name="Genome Biol.">
        <title>A Drosophila full-length cDNA resource.</title>
        <authorList>
            <person name="Stapleton M."/>
            <person name="Carlson J.W."/>
            <person name="Brokstein P."/>
            <person name="Yu C."/>
            <person name="Champe M."/>
            <person name="George R.A."/>
            <person name="Guarin H."/>
            <person name="Kronmiller B."/>
            <person name="Pacleb J.M."/>
            <person name="Park S."/>
            <person name="Wan K.H."/>
            <person name="Rubin G.M."/>
            <person name="Celniker S.E."/>
        </authorList>
    </citation>
    <scope>NUCLEOTIDE SEQUENCE [LARGE SCALE MRNA]</scope>
    <source>
        <strain>Berkeley</strain>
        <tissue>Head</tissue>
    </source>
</reference>
<accession>Q9VMS9</accession>
<dbReference type="EC" id="1.14.-.-"/>
<dbReference type="EMBL" id="AE014134">
    <property type="protein sequence ID" value="AAF52232.1"/>
    <property type="molecule type" value="Genomic_DNA"/>
</dbReference>
<dbReference type="EMBL" id="AY051602">
    <property type="protein sequence ID" value="AAK93026.1"/>
    <property type="molecule type" value="mRNA"/>
</dbReference>
<dbReference type="RefSeq" id="NP_608916.1">
    <property type="nucleotide sequence ID" value="NM_135072.2"/>
</dbReference>
<dbReference type="SMR" id="Q9VMS9"/>
<dbReference type="BioGRID" id="59925">
    <property type="interactions" value="5"/>
</dbReference>
<dbReference type="FunCoup" id="Q9VMS9">
    <property type="interactions" value="3"/>
</dbReference>
<dbReference type="IntAct" id="Q9VMS9">
    <property type="interactions" value="3"/>
</dbReference>
<dbReference type="STRING" id="7227.FBpp0078701"/>
<dbReference type="PaxDb" id="7227-FBpp0078701"/>
<dbReference type="DNASU" id="33754"/>
<dbReference type="EnsemblMetazoa" id="FBtr0079066">
    <property type="protein sequence ID" value="FBpp0078701"/>
    <property type="gene ID" value="FBgn0031693"/>
</dbReference>
<dbReference type="GeneID" id="33754"/>
<dbReference type="KEGG" id="dme:Dmel_CG14032"/>
<dbReference type="UCSC" id="CG14032-RA">
    <property type="organism name" value="d. melanogaster"/>
</dbReference>
<dbReference type="AGR" id="FB:FBgn0031693"/>
<dbReference type="CTD" id="33754"/>
<dbReference type="FlyBase" id="FBgn0031693">
    <property type="gene designation" value="Cyp4ac1"/>
</dbReference>
<dbReference type="VEuPathDB" id="VectorBase:FBgn0031693"/>
<dbReference type="eggNOG" id="KOG0157">
    <property type="taxonomic scope" value="Eukaryota"/>
</dbReference>
<dbReference type="GeneTree" id="ENSGT00940000167779"/>
<dbReference type="HOGENOM" id="CLU_001570_5_1_1"/>
<dbReference type="InParanoid" id="Q9VMS9"/>
<dbReference type="OMA" id="GRNFLWY"/>
<dbReference type="OrthoDB" id="1470350at2759"/>
<dbReference type="PhylomeDB" id="Q9VMS9"/>
<dbReference type="Reactome" id="R-DME-193144">
    <property type="pathway name" value="Estrogen biosynthesis"/>
</dbReference>
<dbReference type="Reactome" id="R-DME-211976">
    <property type="pathway name" value="Endogenous sterols"/>
</dbReference>
<dbReference type="BioGRID-ORCS" id="33754">
    <property type="hits" value="0 hits in 3 CRISPR screens"/>
</dbReference>
<dbReference type="GenomeRNAi" id="33754"/>
<dbReference type="PRO" id="PR:Q9VMS9"/>
<dbReference type="Proteomes" id="UP000000803">
    <property type="component" value="Chromosome 2L"/>
</dbReference>
<dbReference type="Bgee" id="FBgn0031693">
    <property type="expression patterns" value="Expressed in seminal fluid secreting gland and 35 other cell types or tissues"/>
</dbReference>
<dbReference type="GO" id="GO:0005789">
    <property type="term" value="C:endoplasmic reticulum membrane"/>
    <property type="evidence" value="ECO:0007669"/>
    <property type="project" value="UniProtKB-SubCell"/>
</dbReference>
<dbReference type="GO" id="GO:0020037">
    <property type="term" value="F:heme binding"/>
    <property type="evidence" value="ECO:0007669"/>
    <property type="project" value="InterPro"/>
</dbReference>
<dbReference type="GO" id="GO:0005506">
    <property type="term" value="F:iron ion binding"/>
    <property type="evidence" value="ECO:0007669"/>
    <property type="project" value="InterPro"/>
</dbReference>
<dbReference type="GO" id="GO:0004497">
    <property type="term" value="F:monooxygenase activity"/>
    <property type="evidence" value="ECO:0007669"/>
    <property type="project" value="UniProtKB-KW"/>
</dbReference>
<dbReference type="GO" id="GO:0016705">
    <property type="term" value="F:oxidoreductase activity, acting on paired donors, with incorporation or reduction of molecular oxygen"/>
    <property type="evidence" value="ECO:0007669"/>
    <property type="project" value="InterPro"/>
</dbReference>
<dbReference type="CDD" id="cd20628">
    <property type="entry name" value="CYP4"/>
    <property type="match status" value="1"/>
</dbReference>
<dbReference type="Gene3D" id="1.10.630.10">
    <property type="entry name" value="Cytochrome P450"/>
    <property type="match status" value="1"/>
</dbReference>
<dbReference type="InterPro" id="IPR001128">
    <property type="entry name" value="Cyt_P450"/>
</dbReference>
<dbReference type="InterPro" id="IPR017972">
    <property type="entry name" value="Cyt_P450_CS"/>
</dbReference>
<dbReference type="InterPro" id="IPR002401">
    <property type="entry name" value="Cyt_P450_E_grp-I"/>
</dbReference>
<dbReference type="InterPro" id="IPR036396">
    <property type="entry name" value="Cyt_P450_sf"/>
</dbReference>
<dbReference type="InterPro" id="IPR050196">
    <property type="entry name" value="Cytochrome_P450_Monoox"/>
</dbReference>
<dbReference type="PANTHER" id="PTHR24291:SF105">
    <property type="entry name" value="CYTOCHROME P450 4P1-RELATED"/>
    <property type="match status" value="1"/>
</dbReference>
<dbReference type="PANTHER" id="PTHR24291">
    <property type="entry name" value="CYTOCHROME P450 FAMILY 4"/>
    <property type="match status" value="1"/>
</dbReference>
<dbReference type="Pfam" id="PF00067">
    <property type="entry name" value="p450"/>
    <property type="match status" value="1"/>
</dbReference>
<dbReference type="PRINTS" id="PR00463">
    <property type="entry name" value="EP450I"/>
</dbReference>
<dbReference type="PRINTS" id="PR00385">
    <property type="entry name" value="P450"/>
</dbReference>
<dbReference type="SUPFAM" id="SSF48264">
    <property type="entry name" value="Cytochrome P450"/>
    <property type="match status" value="1"/>
</dbReference>
<dbReference type="PROSITE" id="PS00086">
    <property type="entry name" value="CYTOCHROME_P450"/>
    <property type="match status" value="1"/>
</dbReference>
<evidence type="ECO:0000250" key="1"/>
<evidence type="ECO:0000305" key="2"/>
<proteinExistence type="evidence at transcript level"/>
<organism>
    <name type="scientific">Drosophila melanogaster</name>
    <name type="common">Fruit fly</name>
    <dbReference type="NCBI Taxonomy" id="7227"/>
    <lineage>
        <taxon>Eukaryota</taxon>
        <taxon>Metazoa</taxon>
        <taxon>Ecdysozoa</taxon>
        <taxon>Arthropoda</taxon>
        <taxon>Hexapoda</taxon>
        <taxon>Insecta</taxon>
        <taxon>Pterygota</taxon>
        <taxon>Neoptera</taxon>
        <taxon>Endopterygota</taxon>
        <taxon>Diptera</taxon>
        <taxon>Brachycera</taxon>
        <taxon>Muscomorpha</taxon>
        <taxon>Ephydroidea</taxon>
        <taxon>Drosophilidae</taxon>
        <taxon>Drosophila</taxon>
        <taxon>Sophophora</taxon>
    </lineage>
</organism>
<gene>
    <name type="primary">Cyp4ac1</name>
    <name type="ORF">CG14032</name>
</gene>
<name>C4AC1_DROME</name>
<comment type="function">
    <text evidence="1">May be involved in the metabolism of insect hormones and in the breakdown of synthetic insecticides.</text>
</comment>
<comment type="cofactor">
    <cofactor evidence="1">
        <name>heme</name>
        <dbReference type="ChEBI" id="CHEBI:30413"/>
    </cofactor>
</comment>
<comment type="subcellular location">
    <subcellularLocation>
        <location evidence="2">Endoplasmic reticulum membrane</location>
        <topology evidence="2">Peripheral membrane protein</topology>
    </subcellularLocation>
    <subcellularLocation>
        <location evidence="2">Microsome membrane</location>
        <topology evidence="2">Peripheral membrane protein</topology>
    </subcellularLocation>
</comment>
<comment type="similarity">
    <text evidence="2">Belongs to the cytochrome P450 family.</text>
</comment>
<feature type="chain" id="PRO_0000051826" description="Probable cytochrome P450 4ac1">
    <location>
        <begin position="1"/>
        <end position="509"/>
    </location>
</feature>
<feature type="binding site" description="covalent" evidence="1">
    <location>
        <position position="317"/>
    </location>
    <ligand>
        <name>heme</name>
        <dbReference type="ChEBI" id="CHEBI:30413"/>
    </ligand>
</feature>
<feature type="binding site" description="axial binding residue" evidence="1">
    <location>
        <position position="454"/>
    </location>
    <ligand>
        <name>heme</name>
        <dbReference type="ChEBI" id="CHEBI:30413"/>
    </ligand>
    <ligandPart>
        <name>Fe</name>
        <dbReference type="ChEBI" id="CHEBI:18248"/>
    </ligandPart>
</feature>
<protein>
    <recommendedName>
        <fullName>Probable cytochrome P450 4ac1</fullName>
        <ecNumber>1.14.-.-</ecNumber>
    </recommendedName>
    <alternativeName>
        <fullName>CYPIVAC1</fullName>
    </alternativeName>
</protein>
<keyword id="KW-0256">Endoplasmic reticulum</keyword>
<keyword id="KW-0349">Heme</keyword>
<keyword id="KW-0408">Iron</keyword>
<keyword id="KW-0472">Membrane</keyword>
<keyword id="KW-0479">Metal-binding</keyword>
<keyword id="KW-0492">Microsome</keyword>
<keyword id="KW-0503">Monooxygenase</keyword>
<keyword id="KW-0560">Oxidoreductase</keyword>
<keyword id="KW-1185">Reference proteome</keyword>
<sequence>MWIALLGIPILLAVLTLLLKHINKTYFILSLTKRVRTEDGSPLESKVAIMPGKTRFGNNLDILNFTPASVFNFVRESTAKAKGQNYLWYFLYAPMYNVVRPEEAEEVFQSTKLITKNVVYELIRPFLGDGLLISTDHKWHSRRKALTPAFHFNVLQSFLGIFKEECKKFLNVLEKNLDAELELNQVIPPFTLNNICETALGVKLDDMSEGNEYRKAIHAIEEVLIQRVCNPLMYYNWYFFVYGDYRKHLQNLRIVHDFSSRIIERKRQQFQQKQLGEVDEFGRKQRYAMLDTLLAAEADGQIDHQGICDEVNTFMFEGYDTTSTCLIFTLLMLALHEDVQKKCYEEVENLPEDSDDISMFQFNKLVYLECVIKESLRMFPSVPFIGRQCVEETVVNGMVMPKDTQISIHIYDIMRDPRHFPKPDLFQPDRFLPENTVNRHPFAYVPFSAGQRNCIGQKFAILEMKVLLAAVIRNFKLLPATQLEDLTFENGIVLRTQENIKVKLSKRVK</sequence>